<evidence type="ECO:0000255" key="1">
    <source>
        <dbReference type="HAMAP-Rule" id="MF_01328"/>
    </source>
</evidence>
<evidence type="ECO:0000256" key="2">
    <source>
        <dbReference type="SAM" id="MobiDB-lite"/>
    </source>
</evidence>
<evidence type="ECO:0000305" key="3"/>
<keyword id="KW-0687">Ribonucleoprotein</keyword>
<keyword id="KW-0689">Ribosomal protein</keyword>
<keyword id="KW-0694">RNA-binding</keyword>
<keyword id="KW-0699">rRNA-binding</keyword>
<proteinExistence type="inferred from homology"/>
<sequence length="206" mass="23263">MELKVIDAKGQVSGSLSVSDALFAREYNEALVHQLVNAYLANARSGNRAQKTRAEVKHSTKKPWRQKGTGRARSGMTSSPLWRKGGRAFPNKPDENFTQKVNRKMYRAGMATILSQLTRDERLFAIEALTAETPKTKVFAEQVKNLGLEQVLFVTKQLDENVYLASRNLPNVLVLEAQQVDPYSLLRYKKVIITKDAVAQLEEQWV</sequence>
<gene>
    <name evidence="1" type="primary">rplD</name>
    <name type="ordered locus">NMC0133</name>
</gene>
<organism>
    <name type="scientific">Neisseria meningitidis serogroup C / serotype 2a (strain ATCC 700532 / DSM 15464 / FAM18)</name>
    <dbReference type="NCBI Taxonomy" id="272831"/>
    <lineage>
        <taxon>Bacteria</taxon>
        <taxon>Pseudomonadati</taxon>
        <taxon>Pseudomonadota</taxon>
        <taxon>Betaproteobacteria</taxon>
        <taxon>Neisseriales</taxon>
        <taxon>Neisseriaceae</taxon>
        <taxon>Neisseria</taxon>
    </lineage>
</organism>
<dbReference type="EMBL" id="AM421808">
    <property type="protein sequence ID" value="CAM09452.1"/>
    <property type="molecule type" value="Genomic_DNA"/>
</dbReference>
<dbReference type="RefSeq" id="WP_002215402.1">
    <property type="nucleotide sequence ID" value="NC_008767.1"/>
</dbReference>
<dbReference type="SMR" id="A1KRH4"/>
<dbReference type="GeneID" id="93387218"/>
<dbReference type="KEGG" id="nmc:NMC0133"/>
<dbReference type="HOGENOM" id="CLU_041575_5_2_4"/>
<dbReference type="Proteomes" id="UP000002286">
    <property type="component" value="Chromosome"/>
</dbReference>
<dbReference type="GO" id="GO:1990904">
    <property type="term" value="C:ribonucleoprotein complex"/>
    <property type="evidence" value="ECO:0007669"/>
    <property type="project" value="UniProtKB-KW"/>
</dbReference>
<dbReference type="GO" id="GO:0005840">
    <property type="term" value="C:ribosome"/>
    <property type="evidence" value="ECO:0007669"/>
    <property type="project" value="UniProtKB-KW"/>
</dbReference>
<dbReference type="GO" id="GO:0019843">
    <property type="term" value="F:rRNA binding"/>
    <property type="evidence" value="ECO:0007669"/>
    <property type="project" value="UniProtKB-UniRule"/>
</dbReference>
<dbReference type="GO" id="GO:0003735">
    <property type="term" value="F:structural constituent of ribosome"/>
    <property type="evidence" value="ECO:0007669"/>
    <property type="project" value="InterPro"/>
</dbReference>
<dbReference type="GO" id="GO:0006412">
    <property type="term" value="P:translation"/>
    <property type="evidence" value="ECO:0007669"/>
    <property type="project" value="UniProtKB-UniRule"/>
</dbReference>
<dbReference type="FunFam" id="3.40.1370.10:FF:000010">
    <property type="entry name" value="50S ribosomal protein L4"/>
    <property type="match status" value="1"/>
</dbReference>
<dbReference type="Gene3D" id="3.40.1370.10">
    <property type="match status" value="1"/>
</dbReference>
<dbReference type="HAMAP" id="MF_01328_B">
    <property type="entry name" value="Ribosomal_uL4_B"/>
    <property type="match status" value="1"/>
</dbReference>
<dbReference type="InterPro" id="IPR002136">
    <property type="entry name" value="Ribosomal_uL4"/>
</dbReference>
<dbReference type="InterPro" id="IPR013005">
    <property type="entry name" value="Ribosomal_uL4-like"/>
</dbReference>
<dbReference type="InterPro" id="IPR023574">
    <property type="entry name" value="Ribosomal_uL4_dom_sf"/>
</dbReference>
<dbReference type="NCBIfam" id="TIGR03953">
    <property type="entry name" value="rplD_bact"/>
    <property type="match status" value="1"/>
</dbReference>
<dbReference type="PANTHER" id="PTHR10746">
    <property type="entry name" value="50S RIBOSOMAL PROTEIN L4"/>
    <property type="match status" value="1"/>
</dbReference>
<dbReference type="PANTHER" id="PTHR10746:SF6">
    <property type="entry name" value="LARGE RIBOSOMAL SUBUNIT PROTEIN UL4M"/>
    <property type="match status" value="1"/>
</dbReference>
<dbReference type="Pfam" id="PF00573">
    <property type="entry name" value="Ribosomal_L4"/>
    <property type="match status" value="1"/>
</dbReference>
<dbReference type="SUPFAM" id="SSF52166">
    <property type="entry name" value="Ribosomal protein L4"/>
    <property type="match status" value="1"/>
</dbReference>
<reference key="1">
    <citation type="journal article" date="2007" name="PLoS Genet.">
        <title>Meningococcal genetic variation mechanisms viewed through comparative analysis of serogroup C strain FAM18.</title>
        <authorList>
            <person name="Bentley S.D."/>
            <person name="Vernikos G.S."/>
            <person name="Snyder L.A.S."/>
            <person name="Churcher C."/>
            <person name="Arrowsmith C."/>
            <person name="Chillingworth T."/>
            <person name="Cronin A."/>
            <person name="Davis P.H."/>
            <person name="Holroyd N.E."/>
            <person name="Jagels K."/>
            <person name="Maddison M."/>
            <person name="Moule S."/>
            <person name="Rabbinowitsch E."/>
            <person name="Sharp S."/>
            <person name="Unwin L."/>
            <person name="Whitehead S."/>
            <person name="Quail M.A."/>
            <person name="Achtman M."/>
            <person name="Barrell B.G."/>
            <person name="Saunders N.J."/>
            <person name="Parkhill J."/>
        </authorList>
    </citation>
    <scope>NUCLEOTIDE SEQUENCE [LARGE SCALE GENOMIC DNA]</scope>
    <source>
        <strain>ATCC 700532 / DSM 15464 / FAM18</strain>
    </source>
</reference>
<name>RL4_NEIMF</name>
<comment type="function">
    <text evidence="1">One of the primary rRNA binding proteins, this protein initially binds near the 5'-end of the 23S rRNA. It is important during the early stages of 50S assembly. It makes multiple contacts with different domains of the 23S rRNA in the assembled 50S subunit and ribosome.</text>
</comment>
<comment type="function">
    <text evidence="1">Forms part of the polypeptide exit tunnel.</text>
</comment>
<comment type="subunit">
    <text evidence="1">Part of the 50S ribosomal subunit.</text>
</comment>
<comment type="similarity">
    <text evidence="1">Belongs to the universal ribosomal protein uL4 family.</text>
</comment>
<feature type="chain" id="PRO_1000052451" description="Large ribosomal subunit protein uL4">
    <location>
        <begin position="1"/>
        <end position="206"/>
    </location>
</feature>
<feature type="region of interest" description="Disordered" evidence="2">
    <location>
        <begin position="46"/>
        <end position="95"/>
    </location>
</feature>
<feature type="compositionally biased region" description="Basic residues" evidence="2">
    <location>
        <begin position="59"/>
        <end position="70"/>
    </location>
</feature>
<protein>
    <recommendedName>
        <fullName evidence="1">Large ribosomal subunit protein uL4</fullName>
    </recommendedName>
    <alternativeName>
        <fullName evidence="3">50S ribosomal protein L4</fullName>
    </alternativeName>
</protein>
<accession>A1KRH4</accession>